<gene>
    <name type="primary">ssb</name>
    <name type="synonym">ssb-1</name>
    <name type="ordered locus">BA_5722</name>
    <name type="ordered locus">GBAA_5722</name>
    <name type="ordered locus">BAS5326</name>
</gene>
<accession>Q81JI3</accession>
<accession>Q6HQ25</accession>
<accession>Q6KJG9</accession>
<organism>
    <name type="scientific">Bacillus anthracis</name>
    <dbReference type="NCBI Taxonomy" id="1392"/>
    <lineage>
        <taxon>Bacteria</taxon>
        <taxon>Bacillati</taxon>
        <taxon>Bacillota</taxon>
        <taxon>Bacilli</taxon>
        <taxon>Bacillales</taxon>
        <taxon>Bacillaceae</taxon>
        <taxon>Bacillus</taxon>
        <taxon>Bacillus cereus group</taxon>
    </lineage>
</organism>
<protein>
    <recommendedName>
        <fullName evidence="1">Single-stranded DNA-binding protein</fullName>
        <shortName evidence="1">SSB</shortName>
    </recommendedName>
</protein>
<name>SSB_BACAN</name>
<evidence type="ECO:0000255" key="1">
    <source>
        <dbReference type="HAMAP-Rule" id="MF_00984"/>
    </source>
</evidence>
<evidence type="ECO:0000256" key="2">
    <source>
        <dbReference type="SAM" id="MobiDB-lite"/>
    </source>
</evidence>
<evidence type="ECO:0000305" key="3"/>
<feature type="chain" id="PRO_0000096002" description="Single-stranded DNA-binding protein">
    <location>
        <begin position="1"/>
        <end position="172"/>
    </location>
</feature>
<feature type="domain" description="SSB" evidence="1">
    <location>
        <begin position="1"/>
        <end position="103"/>
    </location>
</feature>
<feature type="region of interest" description="Disordered" evidence="2">
    <location>
        <begin position="103"/>
        <end position="172"/>
    </location>
</feature>
<feature type="short sequence motif" description="Important for interaction with partner proteins" evidence="1">
    <location>
        <begin position="167"/>
        <end position="172"/>
    </location>
</feature>
<feature type="compositionally biased region" description="Low complexity" evidence="2">
    <location>
        <begin position="125"/>
        <end position="148"/>
    </location>
</feature>
<comment type="function">
    <text evidence="1">Plays an important role in DNA replication, recombination and repair. Binds to ssDNA and to an array of partner proteins to recruit them to their sites of action during DNA metabolism.</text>
</comment>
<comment type="subunit">
    <text evidence="1">Homotetramer.</text>
</comment>
<comment type="sequence caution" evidence="3">
    <conflict type="erroneous initiation">
        <sequence resource="EMBL-CDS" id="AAP29354"/>
    </conflict>
    <text>Extended N-terminus.</text>
</comment>
<comment type="sequence caution" evidence="3">
    <conflict type="erroneous initiation">
        <sequence resource="EMBL-CDS" id="AAT57613"/>
    </conflict>
    <text>Extended N-terminus.</text>
</comment>
<dbReference type="EMBL" id="AE016879">
    <property type="protein sequence ID" value="AAP29354.2"/>
    <property type="status" value="ALT_INIT"/>
    <property type="molecule type" value="Genomic_DNA"/>
</dbReference>
<dbReference type="EMBL" id="AE017334">
    <property type="protein sequence ID" value="AAT34883.1"/>
    <property type="molecule type" value="Genomic_DNA"/>
</dbReference>
<dbReference type="EMBL" id="AE017225">
    <property type="protein sequence ID" value="AAT57613.1"/>
    <property type="status" value="ALT_INIT"/>
    <property type="molecule type" value="Genomic_DNA"/>
</dbReference>
<dbReference type="RefSeq" id="NP_847868.2">
    <property type="nucleotide sequence ID" value="NC_003997.3"/>
</dbReference>
<dbReference type="RefSeq" id="YP_031563.1">
    <property type="nucleotide sequence ID" value="NC_005945.1"/>
</dbReference>
<dbReference type="SMR" id="Q81JI3"/>
<dbReference type="STRING" id="261594.GBAA_5722"/>
<dbReference type="DNASU" id="1085491"/>
<dbReference type="KEGG" id="ban:BA_5722"/>
<dbReference type="KEGG" id="bar:GBAA_5722"/>
<dbReference type="KEGG" id="bat:BAS5326"/>
<dbReference type="PATRIC" id="fig|1392.234.peg.4878"/>
<dbReference type="eggNOG" id="COG0629">
    <property type="taxonomic scope" value="Bacteria"/>
</dbReference>
<dbReference type="HOGENOM" id="CLU_078758_6_2_9"/>
<dbReference type="OMA" id="FLRCNVW"/>
<dbReference type="Proteomes" id="UP000000427">
    <property type="component" value="Chromosome"/>
</dbReference>
<dbReference type="Proteomes" id="UP000000594">
    <property type="component" value="Chromosome"/>
</dbReference>
<dbReference type="GO" id="GO:0009295">
    <property type="term" value="C:nucleoid"/>
    <property type="evidence" value="ECO:0007669"/>
    <property type="project" value="TreeGrafter"/>
</dbReference>
<dbReference type="GO" id="GO:0003697">
    <property type="term" value="F:single-stranded DNA binding"/>
    <property type="evidence" value="ECO:0007669"/>
    <property type="project" value="UniProtKB-UniRule"/>
</dbReference>
<dbReference type="GO" id="GO:0006310">
    <property type="term" value="P:DNA recombination"/>
    <property type="evidence" value="ECO:0007669"/>
    <property type="project" value="UniProtKB-UniRule"/>
</dbReference>
<dbReference type="GO" id="GO:0006281">
    <property type="term" value="P:DNA repair"/>
    <property type="evidence" value="ECO:0007669"/>
    <property type="project" value="UniProtKB-UniRule"/>
</dbReference>
<dbReference type="GO" id="GO:0006260">
    <property type="term" value="P:DNA replication"/>
    <property type="evidence" value="ECO:0007669"/>
    <property type="project" value="UniProtKB-UniRule"/>
</dbReference>
<dbReference type="CDD" id="cd04496">
    <property type="entry name" value="SSB_OBF"/>
    <property type="match status" value="1"/>
</dbReference>
<dbReference type="FunFam" id="2.40.50.140:FF:000084">
    <property type="entry name" value="Single-stranded DNA-binding protein"/>
    <property type="match status" value="1"/>
</dbReference>
<dbReference type="Gene3D" id="2.40.50.140">
    <property type="entry name" value="Nucleic acid-binding proteins"/>
    <property type="match status" value="1"/>
</dbReference>
<dbReference type="HAMAP" id="MF_00984">
    <property type="entry name" value="SSB"/>
    <property type="match status" value="1"/>
</dbReference>
<dbReference type="InterPro" id="IPR012340">
    <property type="entry name" value="NA-bd_OB-fold"/>
</dbReference>
<dbReference type="InterPro" id="IPR000424">
    <property type="entry name" value="Primosome_PriB/ssb"/>
</dbReference>
<dbReference type="InterPro" id="IPR011344">
    <property type="entry name" value="ssDNA-bd"/>
</dbReference>
<dbReference type="NCBIfam" id="NF005241">
    <property type="entry name" value="PRK06751.1"/>
    <property type="match status" value="1"/>
</dbReference>
<dbReference type="NCBIfam" id="TIGR00621">
    <property type="entry name" value="ssb"/>
    <property type="match status" value="1"/>
</dbReference>
<dbReference type="PANTHER" id="PTHR10302">
    <property type="entry name" value="SINGLE-STRANDED DNA-BINDING PROTEIN"/>
    <property type="match status" value="1"/>
</dbReference>
<dbReference type="PANTHER" id="PTHR10302:SF27">
    <property type="entry name" value="SINGLE-STRANDED DNA-BINDING PROTEIN"/>
    <property type="match status" value="1"/>
</dbReference>
<dbReference type="Pfam" id="PF00436">
    <property type="entry name" value="SSB"/>
    <property type="match status" value="1"/>
</dbReference>
<dbReference type="SUPFAM" id="SSF50249">
    <property type="entry name" value="Nucleic acid-binding proteins"/>
    <property type="match status" value="1"/>
</dbReference>
<dbReference type="PROSITE" id="PS50935">
    <property type="entry name" value="SSB"/>
    <property type="match status" value="1"/>
</dbReference>
<proteinExistence type="inferred from homology"/>
<sequence>MNRVILVGRLTKDPDLRYTPNGVAVATFTLAVNRAFANQQGEREADFINCVIWRKQAENVANYLKKGSLAGVDGRLQTRNYEGQDGKRVYVTEVLAESVQFLEPRNGGGEQRGSFNQQPSGAGFGNQSSNPFGQSSNSGNQGNQGNSGFTKNDDPFSNVGQPIDISDDDLPF</sequence>
<keyword id="KW-0227">DNA damage</keyword>
<keyword id="KW-0233">DNA recombination</keyword>
<keyword id="KW-0234">DNA repair</keyword>
<keyword id="KW-0235">DNA replication</keyword>
<keyword id="KW-0238">DNA-binding</keyword>
<keyword id="KW-1185">Reference proteome</keyword>
<reference key="1">
    <citation type="journal article" date="2003" name="Nature">
        <title>The genome sequence of Bacillus anthracis Ames and comparison to closely related bacteria.</title>
        <authorList>
            <person name="Read T.D."/>
            <person name="Peterson S.N."/>
            <person name="Tourasse N.J."/>
            <person name="Baillie L.W."/>
            <person name="Paulsen I.T."/>
            <person name="Nelson K.E."/>
            <person name="Tettelin H."/>
            <person name="Fouts D.E."/>
            <person name="Eisen J.A."/>
            <person name="Gill S.R."/>
            <person name="Holtzapple E.K."/>
            <person name="Okstad O.A."/>
            <person name="Helgason E."/>
            <person name="Rilstone J."/>
            <person name="Wu M."/>
            <person name="Kolonay J.F."/>
            <person name="Beanan M.J."/>
            <person name="Dodson R.J."/>
            <person name="Brinkac L.M."/>
            <person name="Gwinn M.L."/>
            <person name="DeBoy R.T."/>
            <person name="Madpu R."/>
            <person name="Daugherty S.C."/>
            <person name="Durkin A.S."/>
            <person name="Haft D.H."/>
            <person name="Nelson W.C."/>
            <person name="Peterson J.D."/>
            <person name="Pop M."/>
            <person name="Khouri H.M."/>
            <person name="Radune D."/>
            <person name="Benton J.L."/>
            <person name="Mahamoud Y."/>
            <person name="Jiang L."/>
            <person name="Hance I.R."/>
            <person name="Weidman J.F."/>
            <person name="Berry K.J."/>
            <person name="Plaut R.D."/>
            <person name="Wolf A.M."/>
            <person name="Watkins K.L."/>
            <person name="Nierman W.C."/>
            <person name="Hazen A."/>
            <person name="Cline R.T."/>
            <person name="Redmond C."/>
            <person name="Thwaite J.E."/>
            <person name="White O."/>
            <person name="Salzberg S.L."/>
            <person name="Thomason B."/>
            <person name="Friedlander A.M."/>
            <person name="Koehler T.M."/>
            <person name="Hanna P.C."/>
            <person name="Kolstoe A.-B."/>
            <person name="Fraser C.M."/>
        </authorList>
    </citation>
    <scope>NUCLEOTIDE SEQUENCE [LARGE SCALE GENOMIC DNA]</scope>
    <source>
        <strain>Ames / isolate Porton</strain>
    </source>
</reference>
<reference key="2">
    <citation type="journal article" date="2009" name="J. Bacteriol.">
        <title>The complete genome sequence of Bacillus anthracis Ames 'Ancestor'.</title>
        <authorList>
            <person name="Ravel J."/>
            <person name="Jiang L."/>
            <person name="Stanley S.T."/>
            <person name="Wilson M.R."/>
            <person name="Decker R.S."/>
            <person name="Read T.D."/>
            <person name="Worsham P."/>
            <person name="Keim P.S."/>
            <person name="Salzberg S.L."/>
            <person name="Fraser-Liggett C.M."/>
            <person name="Rasko D.A."/>
        </authorList>
    </citation>
    <scope>NUCLEOTIDE SEQUENCE [LARGE SCALE GENOMIC DNA]</scope>
    <source>
        <strain>Ames ancestor</strain>
    </source>
</reference>
<reference key="3">
    <citation type="submission" date="2004-01" db="EMBL/GenBank/DDBJ databases">
        <title>Complete genome sequence of Bacillus anthracis Sterne.</title>
        <authorList>
            <person name="Brettin T.S."/>
            <person name="Bruce D."/>
            <person name="Challacombe J.F."/>
            <person name="Gilna P."/>
            <person name="Han C."/>
            <person name="Hill K."/>
            <person name="Hitchcock P."/>
            <person name="Jackson P."/>
            <person name="Keim P."/>
            <person name="Longmire J."/>
            <person name="Lucas S."/>
            <person name="Okinaka R."/>
            <person name="Richardson P."/>
            <person name="Rubin E."/>
            <person name="Tice H."/>
        </authorList>
    </citation>
    <scope>NUCLEOTIDE SEQUENCE [LARGE SCALE GENOMIC DNA]</scope>
    <source>
        <strain>Sterne</strain>
    </source>
</reference>